<evidence type="ECO:0000250" key="1"/>
<evidence type="ECO:0000305" key="2"/>
<organism>
    <name type="scientific">Arabidopsis thaliana</name>
    <name type="common">Mouse-ear cress</name>
    <dbReference type="NCBI Taxonomy" id="3702"/>
    <lineage>
        <taxon>Eukaryota</taxon>
        <taxon>Viridiplantae</taxon>
        <taxon>Streptophyta</taxon>
        <taxon>Embryophyta</taxon>
        <taxon>Tracheophyta</taxon>
        <taxon>Spermatophyta</taxon>
        <taxon>Magnoliopsida</taxon>
        <taxon>eudicotyledons</taxon>
        <taxon>Gunneridae</taxon>
        <taxon>Pentapetalae</taxon>
        <taxon>rosids</taxon>
        <taxon>malvids</taxon>
        <taxon>Brassicales</taxon>
        <taxon>Brassicaceae</taxon>
        <taxon>Camelineae</taxon>
        <taxon>Arabidopsis</taxon>
    </lineage>
</organism>
<keyword id="KW-0963">Cytoplasm</keyword>
<keyword id="KW-1185">Reference proteome</keyword>
<keyword id="KW-0677">Repeat</keyword>
<keyword id="KW-0694">RNA-binding</keyword>
<keyword id="KW-0810">Translation regulation</keyword>
<proteinExistence type="evidence at transcript level"/>
<accession>Q9FGE7</accession>
<gene>
    <name type="primary">APUM26</name>
    <name type="ordered locus">At5g64490</name>
    <name type="ORF">T12B11.8</name>
</gene>
<sequence length="187" mass="21009">MLNLDFTHKTTQATPRLHAVATEFLRVSNDVAELHKLSSKLTSDPYLFVEFVKTIRGFLSVQTALGLSGEIDTVFLQVIKGWFPDLITETFSFLIVVRIINLFNKRANSKVYPDILRRIGNNALYLTRNPLRGICLVEKAINVRDPDCTVFIALKLHSHYVELSFEELGSNIVEKLLSVGESGICGV</sequence>
<reference key="1">
    <citation type="submission" date="1999-04" db="EMBL/GenBank/DDBJ databases">
        <title>Structural analysis of Arabidopsis thaliana chromosome 5. XI.</title>
        <authorList>
            <person name="Kaneko T."/>
            <person name="Katoh T."/>
            <person name="Asamizu E."/>
            <person name="Sato S."/>
            <person name="Nakamura Y."/>
            <person name="Kotani H."/>
            <person name="Tabata S."/>
        </authorList>
    </citation>
    <scope>NUCLEOTIDE SEQUENCE [LARGE SCALE GENOMIC DNA]</scope>
    <source>
        <strain>cv. Columbia</strain>
    </source>
</reference>
<reference key="2">
    <citation type="journal article" date="2017" name="Plant J.">
        <title>Araport11: a complete reannotation of the Arabidopsis thaliana reference genome.</title>
        <authorList>
            <person name="Cheng C.Y."/>
            <person name="Krishnakumar V."/>
            <person name="Chan A.P."/>
            <person name="Thibaud-Nissen F."/>
            <person name="Schobel S."/>
            <person name="Town C.D."/>
        </authorList>
    </citation>
    <scope>GENOME REANNOTATION</scope>
    <source>
        <strain>cv. Columbia</strain>
    </source>
</reference>
<reference key="3">
    <citation type="journal article" date="2003" name="Science">
        <title>Empirical analysis of transcriptional activity in the Arabidopsis genome.</title>
        <authorList>
            <person name="Yamada K."/>
            <person name="Lim J."/>
            <person name="Dale J.M."/>
            <person name="Chen H."/>
            <person name="Shinn P."/>
            <person name="Palm C.J."/>
            <person name="Southwick A.M."/>
            <person name="Wu H.C."/>
            <person name="Kim C.J."/>
            <person name="Nguyen M."/>
            <person name="Pham P.K."/>
            <person name="Cheuk R.F."/>
            <person name="Karlin-Newmann G."/>
            <person name="Liu S.X."/>
            <person name="Lam B."/>
            <person name="Sakano H."/>
            <person name="Wu T."/>
            <person name="Yu G."/>
            <person name="Miranda M."/>
            <person name="Quach H.L."/>
            <person name="Tripp M."/>
            <person name="Chang C.H."/>
            <person name="Lee J.M."/>
            <person name="Toriumi M.J."/>
            <person name="Chan M.M."/>
            <person name="Tang C.C."/>
            <person name="Onodera C.S."/>
            <person name="Deng J.M."/>
            <person name="Akiyama K."/>
            <person name="Ansari Y."/>
            <person name="Arakawa T."/>
            <person name="Banh J."/>
            <person name="Banno F."/>
            <person name="Bowser L."/>
            <person name="Brooks S.Y."/>
            <person name="Carninci P."/>
            <person name="Chao Q."/>
            <person name="Choy N."/>
            <person name="Enju A."/>
            <person name="Goldsmith A.D."/>
            <person name="Gurjal M."/>
            <person name="Hansen N.F."/>
            <person name="Hayashizaki Y."/>
            <person name="Johnson-Hopson C."/>
            <person name="Hsuan V.W."/>
            <person name="Iida K."/>
            <person name="Karnes M."/>
            <person name="Khan S."/>
            <person name="Koesema E."/>
            <person name="Ishida J."/>
            <person name="Jiang P.X."/>
            <person name="Jones T."/>
            <person name="Kawai J."/>
            <person name="Kamiya A."/>
            <person name="Meyers C."/>
            <person name="Nakajima M."/>
            <person name="Narusaka M."/>
            <person name="Seki M."/>
            <person name="Sakurai T."/>
            <person name="Satou M."/>
            <person name="Tamse R."/>
            <person name="Vaysberg M."/>
            <person name="Wallender E.K."/>
            <person name="Wong C."/>
            <person name="Yamamura Y."/>
            <person name="Yuan S."/>
            <person name="Shinozaki K."/>
            <person name="Davis R.W."/>
            <person name="Theologis A."/>
            <person name="Ecker J.R."/>
        </authorList>
    </citation>
    <scope>NUCLEOTIDE SEQUENCE [LARGE SCALE MRNA]</scope>
    <source>
        <strain>cv. Columbia</strain>
    </source>
</reference>
<reference key="4">
    <citation type="journal article" date="2010" name="BMC Plant Biol.">
        <title>The Puf family of RNA-binding proteins in plants: phylogeny, structural modeling, activity and subcellular localization.</title>
        <authorList>
            <person name="Tam P.P."/>
            <person name="Barrette-Ng I.H."/>
            <person name="Simon D.M."/>
            <person name="Tam M.W."/>
            <person name="Ang A.L."/>
            <person name="Muench D.G."/>
        </authorList>
    </citation>
    <scope>GENE FAMILY</scope>
</reference>
<dbReference type="EMBL" id="AB025640">
    <property type="protein sequence ID" value="BAB11610.1"/>
    <property type="molecule type" value="Genomic_DNA"/>
</dbReference>
<dbReference type="EMBL" id="CP002688">
    <property type="protein sequence ID" value="AED97907.1"/>
    <property type="molecule type" value="Genomic_DNA"/>
</dbReference>
<dbReference type="EMBL" id="BT004172">
    <property type="protein sequence ID" value="AAO42192.1"/>
    <property type="molecule type" value="mRNA"/>
</dbReference>
<dbReference type="EMBL" id="BT005092">
    <property type="protein sequence ID" value="AAO50625.1"/>
    <property type="molecule type" value="mRNA"/>
</dbReference>
<dbReference type="RefSeq" id="NP_201254.1">
    <property type="nucleotide sequence ID" value="NM_125845.3"/>
</dbReference>
<dbReference type="SMR" id="Q9FGE7"/>
<dbReference type="STRING" id="3702.Q9FGE7"/>
<dbReference type="iPTMnet" id="Q9FGE7"/>
<dbReference type="PaxDb" id="3702-AT5G64490.1"/>
<dbReference type="DNASU" id="836570"/>
<dbReference type="EnsemblPlants" id="AT5G64490.1">
    <property type="protein sequence ID" value="AT5G64490.1"/>
    <property type="gene ID" value="AT5G64490"/>
</dbReference>
<dbReference type="GeneID" id="836570"/>
<dbReference type="Gramene" id="AT5G64490.1">
    <property type="protein sequence ID" value="AT5G64490.1"/>
    <property type="gene ID" value="AT5G64490"/>
</dbReference>
<dbReference type="KEGG" id="ath:AT5G64490"/>
<dbReference type="Araport" id="AT5G64490"/>
<dbReference type="TAIR" id="AT5G64490"/>
<dbReference type="eggNOG" id="KOG2049">
    <property type="taxonomic scope" value="Eukaryota"/>
</dbReference>
<dbReference type="HOGENOM" id="CLU_1449570_0_0_1"/>
<dbReference type="InParanoid" id="Q9FGE7"/>
<dbReference type="PhylomeDB" id="Q9FGE7"/>
<dbReference type="PRO" id="PR:Q9FGE7"/>
<dbReference type="Proteomes" id="UP000006548">
    <property type="component" value="Chromosome 5"/>
</dbReference>
<dbReference type="ExpressionAtlas" id="Q9FGE7">
    <property type="expression patterns" value="baseline and differential"/>
</dbReference>
<dbReference type="GO" id="GO:0005737">
    <property type="term" value="C:cytoplasm"/>
    <property type="evidence" value="ECO:0007669"/>
    <property type="project" value="UniProtKB-SubCell"/>
</dbReference>
<dbReference type="GO" id="GO:0003723">
    <property type="term" value="F:RNA binding"/>
    <property type="evidence" value="ECO:0007669"/>
    <property type="project" value="UniProtKB-KW"/>
</dbReference>
<dbReference type="GO" id="GO:0006417">
    <property type="term" value="P:regulation of translation"/>
    <property type="evidence" value="ECO:0007669"/>
    <property type="project" value="UniProtKB-KW"/>
</dbReference>
<dbReference type="Gene3D" id="1.25.10.10">
    <property type="entry name" value="Leucine-rich Repeat Variant"/>
    <property type="match status" value="1"/>
</dbReference>
<dbReference type="InterPro" id="IPR011989">
    <property type="entry name" value="ARM-like"/>
</dbReference>
<dbReference type="InterPro" id="IPR016024">
    <property type="entry name" value="ARM-type_fold"/>
</dbReference>
<dbReference type="SUPFAM" id="SSF48371">
    <property type="entry name" value="ARM repeat"/>
    <property type="match status" value="1"/>
</dbReference>
<comment type="function">
    <text evidence="1">Sequence-specific RNA-binding protein that regulates translation and mRNA stability by binding the 3'-UTR of target mRNAs.</text>
</comment>
<comment type="subcellular location">
    <subcellularLocation>
        <location evidence="2">Cytoplasm</location>
    </subcellularLocation>
</comment>
<comment type="domain">
    <text evidence="1">The pumilio repeats mediate the association with RNA by packing together to form a right-handed superhelix that approximates a half donut. The number as well as the specific sequence of the repeats determine the specificity for target mRNAs (By similarity).</text>
</comment>
<name>PUM26_ARATH</name>
<protein>
    <recommendedName>
        <fullName>Pumilio homolog 26</fullName>
        <shortName>APUM-26</shortName>
        <shortName>AtPUM26</shortName>
    </recommendedName>
</protein>
<feature type="chain" id="PRO_0000401408" description="Pumilio homolog 26">
    <location>
        <begin position="1"/>
        <end position="187"/>
    </location>
</feature>
<feature type="repeat" description="Pumilio 1; degenerate">
    <location>
        <begin position="20"/>
        <end position="42"/>
    </location>
</feature>
<feature type="repeat" description="Pumilio 2; degenerate">
    <location>
        <begin position="43"/>
        <end position="78"/>
    </location>
</feature>
<feature type="repeat" description="Pumilio 3; degenerate">
    <location>
        <begin position="79"/>
        <end position="116"/>
    </location>
</feature>
<feature type="repeat" description="Pumilio 4; degenerate">
    <location>
        <begin position="117"/>
        <end position="154"/>
    </location>
</feature>
<feature type="repeat" description="Pumilio 5">
    <location>
        <begin position="155"/>
        <end position="187"/>
    </location>
</feature>